<keyword id="KW-0150">Chloroplast</keyword>
<keyword id="KW-0472">Membrane</keyword>
<keyword id="KW-0602">Photosynthesis</keyword>
<keyword id="KW-0604">Photosystem II</keyword>
<keyword id="KW-0934">Plastid</keyword>
<keyword id="KW-0674">Reaction center</keyword>
<keyword id="KW-1185">Reference proteome</keyword>
<keyword id="KW-0793">Thylakoid</keyword>
<keyword id="KW-0812">Transmembrane</keyword>
<keyword id="KW-1133">Transmembrane helix</keyword>
<evidence type="ECO:0000255" key="1">
    <source>
        <dbReference type="HAMAP-Rule" id="MF_01317"/>
    </source>
</evidence>
<reference key="1">
    <citation type="journal article" date="2005" name="Plant Mol. Biol.">
        <title>Complete chloroplast genome sequence of Glycine max and comparative analyses with other legume genomes.</title>
        <authorList>
            <person name="Saski C."/>
            <person name="Lee S.-B."/>
            <person name="Daniell H."/>
            <person name="Wood T.C."/>
            <person name="Tomkins J."/>
            <person name="Kim H.-G."/>
            <person name="Jansen R.K."/>
        </authorList>
    </citation>
    <scope>NUCLEOTIDE SEQUENCE [LARGE SCALE GENOMIC DNA]</scope>
    <source>
        <strain>cv. PI 437654</strain>
    </source>
</reference>
<accession>Q2PMR9</accession>
<name>PSBL_SOYBN</name>
<sequence length="38" mass="4497">MTQSNPNEQNVELNRTSLYWGLLLIFVLAVLFSNYFFN</sequence>
<organism>
    <name type="scientific">Glycine max</name>
    <name type="common">Soybean</name>
    <name type="synonym">Glycine hispida</name>
    <dbReference type="NCBI Taxonomy" id="3847"/>
    <lineage>
        <taxon>Eukaryota</taxon>
        <taxon>Viridiplantae</taxon>
        <taxon>Streptophyta</taxon>
        <taxon>Embryophyta</taxon>
        <taxon>Tracheophyta</taxon>
        <taxon>Spermatophyta</taxon>
        <taxon>Magnoliopsida</taxon>
        <taxon>eudicotyledons</taxon>
        <taxon>Gunneridae</taxon>
        <taxon>Pentapetalae</taxon>
        <taxon>rosids</taxon>
        <taxon>fabids</taxon>
        <taxon>Fabales</taxon>
        <taxon>Fabaceae</taxon>
        <taxon>Papilionoideae</taxon>
        <taxon>50 kb inversion clade</taxon>
        <taxon>NPAAA clade</taxon>
        <taxon>indigoferoid/millettioid clade</taxon>
        <taxon>Phaseoleae</taxon>
        <taxon>Glycine</taxon>
        <taxon>Glycine subgen. Soja</taxon>
    </lineage>
</organism>
<dbReference type="EMBL" id="DQ317523">
    <property type="protein sequence ID" value="ABC25139.1"/>
    <property type="molecule type" value="Genomic_DNA"/>
</dbReference>
<dbReference type="RefSeq" id="YP_538779.1">
    <property type="nucleotide sequence ID" value="NC_007942.1"/>
</dbReference>
<dbReference type="SMR" id="Q2PMR9"/>
<dbReference type="FunCoup" id="Q2PMR9">
    <property type="interactions" value="139"/>
</dbReference>
<dbReference type="STRING" id="3847.Q2PMR9"/>
<dbReference type="GeneID" id="3989311"/>
<dbReference type="KEGG" id="gmx:3989311"/>
<dbReference type="InParanoid" id="Q2PMR9"/>
<dbReference type="Proteomes" id="UP000008827">
    <property type="component" value="Chloroplast"/>
</dbReference>
<dbReference type="GO" id="GO:0009535">
    <property type="term" value="C:chloroplast thylakoid membrane"/>
    <property type="evidence" value="ECO:0007669"/>
    <property type="project" value="UniProtKB-SubCell"/>
</dbReference>
<dbReference type="GO" id="GO:0009539">
    <property type="term" value="C:photosystem II reaction center"/>
    <property type="evidence" value="ECO:0007669"/>
    <property type="project" value="InterPro"/>
</dbReference>
<dbReference type="GO" id="GO:0015979">
    <property type="term" value="P:photosynthesis"/>
    <property type="evidence" value="ECO:0007669"/>
    <property type="project" value="UniProtKB-UniRule"/>
</dbReference>
<dbReference type="HAMAP" id="MF_01317">
    <property type="entry name" value="PSII_PsbL"/>
    <property type="match status" value="1"/>
</dbReference>
<dbReference type="InterPro" id="IPR003372">
    <property type="entry name" value="PSII_PsbL"/>
</dbReference>
<dbReference type="InterPro" id="IPR037266">
    <property type="entry name" value="PSII_PsbL_sf"/>
</dbReference>
<dbReference type="NCBIfam" id="NF001972">
    <property type="entry name" value="PRK00753.1"/>
    <property type="match status" value="1"/>
</dbReference>
<dbReference type="Pfam" id="PF02419">
    <property type="entry name" value="PsbL"/>
    <property type="match status" value="1"/>
</dbReference>
<dbReference type="SUPFAM" id="SSF161017">
    <property type="entry name" value="Photosystem II reaction center protein L, PsbL"/>
    <property type="match status" value="1"/>
</dbReference>
<comment type="function">
    <text evidence="1">One of the components of the core complex of photosystem II (PSII). PSII is a light-driven water:plastoquinone oxidoreductase that uses light energy to abstract electrons from H(2)O, generating O(2) and a proton gradient subsequently used for ATP formation. It consists of a core antenna complex that captures photons, and an electron transfer chain that converts photonic excitation into a charge separation. This subunit is found at the monomer-monomer interface and is required for correct PSII assembly and/or dimerization.</text>
</comment>
<comment type="subunit">
    <text evidence="1">PSII is composed of 1 copy each of membrane proteins PsbA, PsbB, PsbC, PsbD, PsbE, PsbF, PsbH, PsbI, PsbJ, PsbK, PsbL, PsbM, PsbT, PsbX, PsbY, PsbZ, Psb30/Ycf12, at least 3 peripheral proteins of the oxygen-evolving complex and a large number of cofactors. It forms dimeric complexes.</text>
</comment>
<comment type="subcellular location">
    <subcellularLocation>
        <location evidence="1">Plastid</location>
        <location evidence="1">Chloroplast thylakoid membrane</location>
        <topology evidence="1">Single-pass membrane protein</topology>
    </subcellularLocation>
</comment>
<comment type="similarity">
    <text evidence="1">Belongs to the PsbL family.</text>
</comment>
<geneLocation type="chloroplast"/>
<gene>
    <name evidence="1" type="primary">psbL</name>
</gene>
<protein>
    <recommendedName>
        <fullName evidence="1">Photosystem II reaction center protein L</fullName>
        <shortName evidence="1">PSII-L</shortName>
    </recommendedName>
</protein>
<feature type="chain" id="PRO_0000276207" description="Photosystem II reaction center protein L">
    <location>
        <begin position="1"/>
        <end position="38"/>
    </location>
</feature>
<feature type="transmembrane region" description="Helical" evidence="1">
    <location>
        <begin position="17"/>
        <end position="37"/>
    </location>
</feature>
<proteinExistence type="inferred from homology"/>